<accession>P33731</accession>
<name>SRP72_CANLF</name>
<keyword id="KW-0002">3D-structure</keyword>
<keyword id="KW-0007">Acetylation</keyword>
<keyword id="KW-0963">Cytoplasm</keyword>
<keyword id="KW-0903">Direct protein sequencing</keyword>
<keyword id="KW-0256">Endoplasmic reticulum</keyword>
<keyword id="KW-1017">Isopeptide bond</keyword>
<keyword id="KW-0597">Phosphoprotein</keyword>
<keyword id="KW-1185">Reference proteome</keyword>
<keyword id="KW-0677">Repeat</keyword>
<keyword id="KW-0687">Ribonucleoprotein</keyword>
<keyword id="KW-0733">Signal recognition particle</keyword>
<keyword id="KW-0802">TPR repeat</keyword>
<keyword id="KW-0832">Ubl conjugation</keyword>
<proteinExistence type="evidence at protein level"/>
<organism>
    <name type="scientific">Canis lupus familiaris</name>
    <name type="common">Dog</name>
    <name type="synonym">Canis familiaris</name>
    <dbReference type="NCBI Taxonomy" id="9615"/>
    <lineage>
        <taxon>Eukaryota</taxon>
        <taxon>Metazoa</taxon>
        <taxon>Chordata</taxon>
        <taxon>Craniata</taxon>
        <taxon>Vertebrata</taxon>
        <taxon>Euteleostomi</taxon>
        <taxon>Mammalia</taxon>
        <taxon>Eutheria</taxon>
        <taxon>Laurasiatheria</taxon>
        <taxon>Carnivora</taxon>
        <taxon>Caniformia</taxon>
        <taxon>Canidae</taxon>
        <taxon>Canis</taxon>
    </lineage>
</organism>
<sequence length="671" mass="74494">MASGGSGGVSVPALWSEVNRYGQNGDFTRALKTVNKILQINKDDVTALHCKVVCLIQNGSFKEALNVINTHTKVLANNSLSFEKAYCEYRLNRIENALKTIESANQQTDKLKELYGQVLYRLERYDECLAVYRDLVRNSQDDYDEERKTNLSAVVAAQSNWEKVVPENLGLQEGTHELCYNAACALIGQGQLSQAMKILQKAEDLCRRSLSEDSDGTEEDPQAELAIIHGQMAYILQLQGRTEEALQLYNQIIKLKPTDVGLLAVIANNIITINKDQNVFDSKKKVKLTNAEGVEFKLSKKQLQAIEFNKALLAMYTNQAEQCRKISASLQSQSPEHLLPVLIQAAQLCREKQHTKAIELLQEFSDQHPENAAEIKLTMAQLKISQGNISKACLILRSIEELKHKPGMVSALVTMYSHEEDIDSAIEVFTQAIQWYQNHQPKSSAHLSLIREAANFKLKYGRKKEAISDLEQLWKQNPKDIHTLAQLISAYSLVDPEKAKALSKHLPSSDSMSLKVDVEALENSPGATYIRKKGGKVAGDSQPKEQGQGDLKKKKKKKKGKLPKNYDPKVTPDPERWLPMRERSYYRGRKKGKKKDQIGKGTQGATAGASSELDASKTVSSPPTSPRPGSAATASASTSNIIPPRHQKPAGAPATKKKQQQKKKKGGKGGW</sequence>
<reference key="1">
    <citation type="journal article" date="1993" name="J. Cell Biol.">
        <title>Assembly of the 68- and 72-kD proteins of signal recognition particle with 7S RNA.</title>
        <authorList>
            <person name="Luetcke H."/>
            <person name="Prehn S."/>
            <person name="Ashford A.J."/>
            <person name="Remus M."/>
            <person name="Frank R."/>
            <person name="Dobberstein B."/>
        </authorList>
    </citation>
    <scope>NUCLEOTIDE SEQUENCE [MRNA]</scope>
    <scope>PROTEIN SEQUENCE OF 113-121; 148-162; 242-254; 311-322; 357-361; 363-375; 443-451; 465-475 AND 577-581</scope>
    <scope>FUNCTION</scope>
    <scope>SUBUNIT</scope>
    <scope>INTERACTION WITH SRP62</scope>
    <source>
        <strain>Cocker spaniel</strain>
        <tissue>Kidney</tissue>
    </source>
</reference>
<reference key="2">
    <citation type="journal article" date="1980" name="Proc. Natl. Acad. Sci. U.S.A.">
        <title>Purification of a membrane-associated protein complex required for protein translocation across the endoplasmic reticulum.</title>
        <authorList>
            <person name="Walter P."/>
            <person name="Blobel G."/>
        </authorList>
    </citation>
    <scope>FUNCTION</scope>
    <scope>IDENTIFICATION IN A SIGNAL RECOGNITION PARTICLE COMPLEX</scope>
</reference>
<reference key="3">
    <citation type="journal article" date="1983" name="Cell">
        <title>Disassembly and reconstitution of signal recognition particle.</title>
        <authorList>
            <person name="Walter P."/>
            <person name="Blobel G."/>
        </authorList>
    </citation>
    <scope>FUNCTION</scope>
    <scope>SUBUNIT</scope>
    <scope>INTERACTION WITH SRP68</scope>
</reference>
<gene>
    <name type="primary">SRP72</name>
</gene>
<feature type="initiator methionine" description="Removed" evidence="1">
    <location>
        <position position="1"/>
    </location>
</feature>
<feature type="chain" id="PRO_0000135233" description="Signal recognition particle subunit SRP72">
    <location>
        <begin position="2"/>
        <end position="671"/>
    </location>
</feature>
<feature type="repeat" description="TPR 1" evidence="3">
    <location>
        <begin position="11"/>
        <end position="44"/>
    </location>
</feature>
<feature type="repeat" description="TPR 2" evidence="3">
    <location>
        <begin position="109"/>
        <end position="142"/>
    </location>
</feature>
<feature type="repeat" description="TPR 3" evidence="3">
    <location>
        <begin position="226"/>
        <end position="259"/>
    </location>
</feature>
<feature type="repeat" description="TPR 4" evidence="3">
    <location>
        <begin position="406"/>
        <end position="439"/>
    </location>
</feature>
<feature type="repeat" description="TPR 5" evidence="3">
    <location>
        <begin position="447"/>
        <end position="480"/>
    </location>
</feature>
<feature type="region of interest" description="Required for interaction with SRP68" evidence="1">
    <location>
        <begin position="9"/>
        <end position="163"/>
    </location>
</feature>
<feature type="region of interest" description="Required for the interaction with the SRP68/7SL RNA complex" evidence="7">
    <location>
        <begin position="379"/>
        <end position="509"/>
    </location>
</feature>
<feature type="region of interest" description="Disordered" evidence="4">
    <location>
        <begin position="527"/>
        <end position="671"/>
    </location>
</feature>
<feature type="region of interest" description="RNA-binding" evidence="1">
    <location>
        <begin position="545"/>
        <end position="617"/>
    </location>
</feature>
<feature type="compositionally biased region" description="Basic residues" evidence="4">
    <location>
        <begin position="552"/>
        <end position="562"/>
    </location>
</feature>
<feature type="compositionally biased region" description="Basic and acidic residues" evidence="4">
    <location>
        <begin position="564"/>
        <end position="585"/>
    </location>
</feature>
<feature type="compositionally biased region" description="Low complexity" evidence="4">
    <location>
        <begin position="616"/>
        <end position="639"/>
    </location>
</feature>
<feature type="compositionally biased region" description="Basic residues" evidence="4">
    <location>
        <begin position="655"/>
        <end position="671"/>
    </location>
</feature>
<feature type="modified residue" description="Blocked amino end (Ala); alternate">
    <location>
        <position position="2"/>
    </location>
</feature>
<feature type="modified residue" description="N-acetylalanine; alternate" evidence="1">
    <location>
        <position position="2"/>
    </location>
</feature>
<feature type="modified residue" description="Phosphothreonine" evidence="1">
    <location>
        <position position="571"/>
    </location>
</feature>
<feature type="modified residue" description="Phosphothreonine" evidence="1">
    <location>
        <position position="618"/>
    </location>
</feature>
<feature type="modified residue" description="Phosphoserine" evidence="1">
    <location>
        <position position="630"/>
    </location>
</feature>
<feature type="modified residue" description="Phosphoserine" evidence="1">
    <location>
        <position position="635"/>
    </location>
</feature>
<feature type="cross-link" description="Glycyl lysine isopeptide (Lys-Gly) (interchain with G-Cter in SUMO1); alternate" evidence="1">
    <location>
        <position position="391"/>
    </location>
</feature>
<feature type="cross-link" description="Glycyl lysine isopeptide (Lys-Gly) (interchain with G-Cter in SUMO2); alternate" evidence="1">
    <location>
        <position position="391"/>
    </location>
</feature>
<evidence type="ECO:0000250" key="1">
    <source>
        <dbReference type="UniProtKB" id="O76094"/>
    </source>
</evidence>
<evidence type="ECO:0000250" key="2">
    <source>
        <dbReference type="UniProtKB" id="P38688"/>
    </source>
</evidence>
<evidence type="ECO:0000255" key="3">
    <source>
        <dbReference type="PROSITE-ProRule" id="PRU00339"/>
    </source>
</evidence>
<evidence type="ECO:0000256" key="4">
    <source>
        <dbReference type="SAM" id="MobiDB-lite"/>
    </source>
</evidence>
<evidence type="ECO:0000269" key="5">
    <source>
    </source>
</evidence>
<evidence type="ECO:0000269" key="6">
    <source>
    </source>
</evidence>
<evidence type="ECO:0000269" key="7">
    <source>
    </source>
</evidence>
<evidence type="ECO:0000305" key="8"/>
<comment type="function">
    <text evidence="1 2 5 7">Component of the signal recognition particle (SRP) complex, a ribonucleoprotein complex that mediates the cotranslational targeting of secretory and membrane proteins to the endoplasmic reticulum (ER) (PubMed:6413076). The SRP complex interacts with the signal sequence in nascent secretory and membrane proteins and directs them to the membrane of the ER (PubMed:6413076). The SRP complex targets the ribosome-nascent chain complex to the SRP receptor (SR), which is anchored in the ER, where SR compaction and GTPase rearrangement drive cotranslational protein translocation into the ER (By similarity). Binds the signal recognition particle RNA (7SL RNA) in presence of SRP68 (PubMed:6413076, PubMed:8388879). Can bind 7SL RNA with low affinity (By similarity). The SRP complex possibly participates in the elongation arrest function (By similarity).</text>
</comment>
<comment type="subunit">
    <text evidence="5 6 7">Heterodimer with SRP68 (PubMed:6413076, PubMed:8388879). SRP68-SRP72 heterodimer formation is stabilized by the presence of 7SL RNA (PubMed:6413076, PubMed:8388879). Component of a signal recognition particle consisting of a 7SL RNA molecule of 300 nucleotides and six protein subunits: SRP72, SRP68, SRP54, SRP19, SRP14 and SRP9 (PubMed:6413076, PubMed:6938958). Within the SRP complex, interacts with SRP68 (via C-terminus) (PubMed:6413076, PubMed:8388879).</text>
</comment>
<comment type="subcellular location">
    <subcellularLocation>
        <location evidence="1">Cytoplasm</location>
    </subcellularLocation>
    <subcellularLocation>
        <location evidence="1">Endoplasmic reticulum</location>
    </subcellularLocation>
</comment>
<comment type="similarity">
    <text evidence="8">Belongs to the SRP72 family.</text>
</comment>
<dbReference type="EMBL" id="X67813">
    <property type="protein sequence ID" value="CAA48014.1"/>
    <property type="molecule type" value="mRNA"/>
</dbReference>
<dbReference type="PIR" id="A40692">
    <property type="entry name" value="A40692"/>
</dbReference>
<dbReference type="RefSeq" id="NP_001003264.1">
    <property type="nucleotide sequence ID" value="NM_001003264.1"/>
</dbReference>
<dbReference type="PDB" id="6FRK">
    <property type="method" value="EM"/>
    <property type="resolution" value="3.70 A"/>
    <property type="chains" value="r=1-581"/>
</dbReference>
<dbReference type="PDB" id="7OBQ">
    <property type="method" value="EM"/>
    <property type="resolution" value="3.90 A"/>
    <property type="chains" value="z=1-671"/>
</dbReference>
<dbReference type="PDB" id="7OBR">
    <property type="method" value="EM"/>
    <property type="resolution" value="2.80 A"/>
    <property type="chains" value="z=1-671"/>
</dbReference>
<dbReference type="PDBsum" id="6FRK"/>
<dbReference type="PDBsum" id="7OBQ"/>
<dbReference type="PDBsum" id="7OBR"/>
<dbReference type="EMDB" id="EMD-12799"/>
<dbReference type="EMDB" id="EMD-12801"/>
<dbReference type="EMDB" id="EMD-4300"/>
<dbReference type="SMR" id="P33731"/>
<dbReference type="BioGRID" id="139860">
    <property type="interactions" value="1"/>
</dbReference>
<dbReference type="FunCoup" id="P33731">
    <property type="interactions" value="1432"/>
</dbReference>
<dbReference type="STRING" id="9615.ENSCAFP00000003266"/>
<dbReference type="PaxDb" id="9612-ENSCAFP00000003266"/>
<dbReference type="Ensembl" id="ENSCAFT00000003524.5">
    <property type="protein sequence ID" value="ENSCAFP00000003266.3"/>
    <property type="gene ID" value="ENSCAFG00000002244.5"/>
</dbReference>
<dbReference type="Ensembl" id="ENSCAFT00030039277.1">
    <property type="protein sequence ID" value="ENSCAFP00030034265.1"/>
    <property type="gene ID" value="ENSCAFG00030021373.1"/>
</dbReference>
<dbReference type="Ensembl" id="ENSCAFT00040033614.1">
    <property type="protein sequence ID" value="ENSCAFP00040029251.1"/>
    <property type="gene ID" value="ENSCAFG00040018184.1"/>
</dbReference>
<dbReference type="Ensembl" id="ENSCAFT00845024627.1">
    <property type="protein sequence ID" value="ENSCAFP00845019372.1"/>
    <property type="gene ID" value="ENSCAFG00845013778.1"/>
</dbReference>
<dbReference type="GeneID" id="403944"/>
<dbReference type="KEGG" id="cfa:403944"/>
<dbReference type="CTD" id="6731"/>
<dbReference type="VEuPathDB" id="HostDB:ENSCAFG00845013778"/>
<dbReference type="VGNC" id="VGNC:46809">
    <property type="gene designation" value="SRP72"/>
</dbReference>
<dbReference type="eggNOG" id="KOG2376">
    <property type="taxonomic scope" value="Eukaryota"/>
</dbReference>
<dbReference type="GeneTree" id="ENSGT00390000013264"/>
<dbReference type="HOGENOM" id="CLU_013808_1_0_1"/>
<dbReference type="InParanoid" id="P33731"/>
<dbReference type="OMA" id="NDMKVLA"/>
<dbReference type="OrthoDB" id="5421607at2759"/>
<dbReference type="TreeFam" id="TF106250"/>
<dbReference type="Reactome" id="R-CFA-1799339">
    <property type="pathway name" value="SRP-dependent cotranslational protein targeting to membrane"/>
</dbReference>
<dbReference type="Proteomes" id="UP000002254">
    <property type="component" value="Chromosome 13"/>
</dbReference>
<dbReference type="Proteomes" id="UP000694429">
    <property type="component" value="Chromosome 13"/>
</dbReference>
<dbReference type="Proteomes" id="UP000694542">
    <property type="component" value="Chromosome 13"/>
</dbReference>
<dbReference type="Proteomes" id="UP000805418">
    <property type="component" value="Chromosome 13"/>
</dbReference>
<dbReference type="Bgee" id="ENSCAFG00000002244">
    <property type="expression patterns" value="Expressed in keratinocyte and 48 other cell types or tissues"/>
</dbReference>
<dbReference type="GO" id="GO:0005829">
    <property type="term" value="C:cytosol"/>
    <property type="evidence" value="ECO:0000304"/>
    <property type="project" value="Reactome"/>
</dbReference>
<dbReference type="GO" id="GO:0005783">
    <property type="term" value="C:endoplasmic reticulum"/>
    <property type="evidence" value="ECO:0000250"/>
    <property type="project" value="UniProtKB"/>
</dbReference>
<dbReference type="GO" id="GO:0005786">
    <property type="term" value="C:signal recognition particle, endoplasmic reticulum targeting"/>
    <property type="evidence" value="ECO:0000318"/>
    <property type="project" value="GO_Central"/>
</dbReference>
<dbReference type="GO" id="GO:0008312">
    <property type="term" value="F:7S RNA binding"/>
    <property type="evidence" value="ECO:0000318"/>
    <property type="project" value="GO_Central"/>
</dbReference>
<dbReference type="GO" id="GO:0043022">
    <property type="term" value="F:ribosome binding"/>
    <property type="evidence" value="ECO:0007669"/>
    <property type="project" value="Ensembl"/>
</dbReference>
<dbReference type="GO" id="GO:0005047">
    <property type="term" value="F:signal recognition particle binding"/>
    <property type="evidence" value="ECO:0007669"/>
    <property type="project" value="Ensembl"/>
</dbReference>
<dbReference type="GO" id="GO:0030911">
    <property type="term" value="F:TPR domain binding"/>
    <property type="evidence" value="ECO:0007669"/>
    <property type="project" value="Ensembl"/>
</dbReference>
<dbReference type="GO" id="GO:0006614">
    <property type="term" value="P:SRP-dependent cotranslational protein targeting to membrane"/>
    <property type="evidence" value="ECO:0000318"/>
    <property type="project" value="GO_Central"/>
</dbReference>
<dbReference type="FunFam" id="1.25.40.10:FF:000062">
    <property type="entry name" value="Signal recognition particle subunit SRP72"/>
    <property type="match status" value="1"/>
</dbReference>
<dbReference type="FunFam" id="1.25.40.10:FF:000133">
    <property type="entry name" value="Signal recognition particle subunit SRP72"/>
    <property type="match status" value="1"/>
</dbReference>
<dbReference type="FunFam" id="1.25.40.10:FF:000369">
    <property type="entry name" value="Signal recognition particle subunit SRP72"/>
    <property type="match status" value="1"/>
</dbReference>
<dbReference type="FunFam" id="1.25.40.10:FF:000847">
    <property type="entry name" value="Signal recognition particle subunit SRP72"/>
    <property type="match status" value="1"/>
</dbReference>
<dbReference type="Gene3D" id="1.25.40.10">
    <property type="entry name" value="Tetratricopeptide repeat domain"/>
    <property type="match status" value="4"/>
</dbReference>
<dbReference type="InterPro" id="IPR013699">
    <property type="entry name" value="Signal_recog_part_SRP72_RNA-bd"/>
</dbReference>
<dbReference type="InterPro" id="IPR026270">
    <property type="entry name" value="SRP72"/>
</dbReference>
<dbReference type="InterPro" id="IPR031545">
    <property type="entry name" value="SRP72_TPR-like"/>
</dbReference>
<dbReference type="InterPro" id="IPR011990">
    <property type="entry name" value="TPR-like_helical_dom_sf"/>
</dbReference>
<dbReference type="InterPro" id="IPR019734">
    <property type="entry name" value="TPR_rpt"/>
</dbReference>
<dbReference type="PANTHER" id="PTHR14094">
    <property type="entry name" value="SIGNAL RECOGNITION PARTICLE 72"/>
    <property type="match status" value="1"/>
</dbReference>
<dbReference type="PANTHER" id="PTHR14094:SF9">
    <property type="entry name" value="SIGNAL RECOGNITION PARTICLE SUBUNIT SRP72"/>
    <property type="match status" value="1"/>
</dbReference>
<dbReference type="Pfam" id="PF08492">
    <property type="entry name" value="SRP72"/>
    <property type="match status" value="1"/>
</dbReference>
<dbReference type="Pfam" id="PF17004">
    <property type="entry name" value="SRP_TPR_like"/>
    <property type="match status" value="1"/>
</dbReference>
<dbReference type="Pfam" id="PF13181">
    <property type="entry name" value="TPR_8"/>
    <property type="match status" value="2"/>
</dbReference>
<dbReference type="PIRSF" id="PIRSF038922">
    <property type="entry name" value="SRP72"/>
    <property type="match status" value="1"/>
</dbReference>
<dbReference type="SMART" id="SM00028">
    <property type="entry name" value="TPR"/>
    <property type="match status" value="5"/>
</dbReference>
<dbReference type="SUPFAM" id="SSF48452">
    <property type="entry name" value="TPR-like"/>
    <property type="match status" value="2"/>
</dbReference>
<dbReference type="PROSITE" id="PS50005">
    <property type="entry name" value="TPR"/>
    <property type="match status" value="5"/>
</dbReference>
<dbReference type="PROSITE" id="PS50293">
    <property type="entry name" value="TPR_REGION"/>
    <property type="match status" value="3"/>
</dbReference>
<protein>
    <recommendedName>
        <fullName>Signal recognition particle subunit SRP72</fullName>
        <shortName>SRP72</shortName>
    </recommendedName>
    <alternativeName>
        <fullName>Signal recognition particle 72 kDa protein</fullName>
    </alternativeName>
</protein>